<protein>
    <recommendedName>
        <fullName evidence="1">Aspartyl/glutamyl-tRNA(Asn/Gln) amidotransferase subunit C</fullName>
        <shortName evidence="1">Asp/Glu-ADT subunit C</shortName>
        <ecNumber evidence="1">6.3.5.-</ecNumber>
    </recommendedName>
</protein>
<dbReference type="EC" id="6.3.5.-" evidence="1"/>
<dbReference type="EMBL" id="CP000002">
    <property type="protein sequence ID" value="AAU22315.1"/>
    <property type="molecule type" value="Genomic_DNA"/>
</dbReference>
<dbReference type="EMBL" id="AE017333">
    <property type="protein sequence ID" value="AAU39665.1"/>
    <property type="molecule type" value="Genomic_DNA"/>
</dbReference>
<dbReference type="RefSeq" id="WP_003179590.1">
    <property type="nucleotide sequence ID" value="NC_006322.1"/>
</dbReference>
<dbReference type="SMR" id="Q65MP9"/>
<dbReference type="STRING" id="279010.BL00600"/>
<dbReference type="GeneID" id="92862689"/>
<dbReference type="KEGG" id="bld:BLi00730"/>
<dbReference type="KEGG" id="bli:BL00600"/>
<dbReference type="eggNOG" id="COG0721">
    <property type="taxonomic scope" value="Bacteria"/>
</dbReference>
<dbReference type="HOGENOM" id="CLU_105899_6_1_9"/>
<dbReference type="Proteomes" id="UP000000606">
    <property type="component" value="Chromosome"/>
</dbReference>
<dbReference type="GO" id="GO:0050566">
    <property type="term" value="F:asparaginyl-tRNA synthase (glutamine-hydrolyzing) activity"/>
    <property type="evidence" value="ECO:0007669"/>
    <property type="project" value="RHEA"/>
</dbReference>
<dbReference type="GO" id="GO:0005524">
    <property type="term" value="F:ATP binding"/>
    <property type="evidence" value="ECO:0007669"/>
    <property type="project" value="UniProtKB-KW"/>
</dbReference>
<dbReference type="GO" id="GO:0050567">
    <property type="term" value="F:glutaminyl-tRNA synthase (glutamine-hydrolyzing) activity"/>
    <property type="evidence" value="ECO:0007669"/>
    <property type="project" value="UniProtKB-UniRule"/>
</dbReference>
<dbReference type="GO" id="GO:0070681">
    <property type="term" value="P:glutaminyl-tRNAGln biosynthesis via transamidation"/>
    <property type="evidence" value="ECO:0007669"/>
    <property type="project" value="TreeGrafter"/>
</dbReference>
<dbReference type="GO" id="GO:0006450">
    <property type="term" value="P:regulation of translational fidelity"/>
    <property type="evidence" value="ECO:0007669"/>
    <property type="project" value="InterPro"/>
</dbReference>
<dbReference type="GO" id="GO:0006412">
    <property type="term" value="P:translation"/>
    <property type="evidence" value="ECO:0007669"/>
    <property type="project" value="UniProtKB-UniRule"/>
</dbReference>
<dbReference type="Gene3D" id="1.10.20.60">
    <property type="entry name" value="Glu-tRNAGln amidotransferase C subunit, N-terminal domain"/>
    <property type="match status" value="1"/>
</dbReference>
<dbReference type="HAMAP" id="MF_00122">
    <property type="entry name" value="GatC"/>
    <property type="match status" value="1"/>
</dbReference>
<dbReference type="InterPro" id="IPR036113">
    <property type="entry name" value="Asp/Glu-ADT_sf_sub_c"/>
</dbReference>
<dbReference type="InterPro" id="IPR003837">
    <property type="entry name" value="GatC"/>
</dbReference>
<dbReference type="NCBIfam" id="TIGR00135">
    <property type="entry name" value="gatC"/>
    <property type="match status" value="1"/>
</dbReference>
<dbReference type="PANTHER" id="PTHR15004">
    <property type="entry name" value="GLUTAMYL-TRNA(GLN) AMIDOTRANSFERASE SUBUNIT C, MITOCHONDRIAL"/>
    <property type="match status" value="1"/>
</dbReference>
<dbReference type="PANTHER" id="PTHR15004:SF0">
    <property type="entry name" value="GLUTAMYL-TRNA(GLN) AMIDOTRANSFERASE SUBUNIT C, MITOCHONDRIAL"/>
    <property type="match status" value="1"/>
</dbReference>
<dbReference type="Pfam" id="PF02686">
    <property type="entry name" value="GatC"/>
    <property type="match status" value="1"/>
</dbReference>
<dbReference type="SUPFAM" id="SSF141000">
    <property type="entry name" value="Glu-tRNAGln amidotransferase C subunit"/>
    <property type="match status" value="1"/>
</dbReference>
<accession>Q65MP9</accession>
<accession>Q62Y43</accession>
<evidence type="ECO:0000255" key="1">
    <source>
        <dbReference type="HAMAP-Rule" id="MF_00122"/>
    </source>
</evidence>
<organism>
    <name type="scientific">Bacillus licheniformis (strain ATCC 14580 / DSM 13 / JCM 2505 / CCUG 7422 / NBRC 12200 / NCIMB 9375 / NCTC 10341 / NRRL NRS-1264 / Gibson 46)</name>
    <dbReference type="NCBI Taxonomy" id="279010"/>
    <lineage>
        <taxon>Bacteria</taxon>
        <taxon>Bacillati</taxon>
        <taxon>Bacillota</taxon>
        <taxon>Bacilli</taxon>
        <taxon>Bacillales</taxon>
        <taxon>Bacillaceae</taxon>
        <taxon>Bacillus</taxon>
    </lineage>
</organism>
<name>GATC_BACLD</name>
<sequence>MSRISIEEVKHVAHLARLAITDEEAAMFTEQLDSIISFAEELNEVDTENVKPTTHVLQMKNIMREDVPDKGLPVEDVVKNAPDHKDGYIRVPSILD</sequence>
<reference key="1">
    <citation type="journal article" date="2004" name="J. Mol. Microbiol. Biotechnol.">
        <title>The complete genome sequence of Bacillus licheniformis DSM13, an organism with great industrial potential.</title>
        <authorList>
            <person name="Veith B."/>
            <person name="Herzberg C."/>
            <person name="Steckel S."/>
            <person name="Feesche J."/>
            <person name="Maurer K.H."/>
            <person name="Ehrenreich P."/>
            <person name="Baeumer S."/>
            <person name="Henne A."/>
            <person name="Liesegang H."/>
            <person name="Merkl R."/>
            <person name="Ehrenreich A."/>
            <person name="Gottschalk G."/>
        </authorList>
    </citation>
    <scope>NUCLEOTIDE SEQUENCE [LARGE SCALE GENOMIC DNA]</scope>
    <source>
        <strain>ATCC 14580 / DSM 13 / JCM 2505 / CCUG 7422 / NBRC 12200 / NCIMB 9375 / NCTC 10341 / NRRL NRS-1264 / Gibson 46</strain>
    </source>
</reference>
<reference key="2">
    <citation type="journal article" date="2004" name="Genome Biol.">
        <title>Complete genome sequence of the industrial bacterium Bacillus licheniformis and comparisons with closely related Bacillus species.</title>
        <authorList>
            <person name="Rey M.W."/>
            <person name="Ramaiya P."/>
            <person name="Nelson B.A."/>
            <person name="Brody-Karpin S.D."/>
            <person name="Zaretsky E.J."/>
            <person name="Tang M."/>
            <person name="Lopez de Leon A."/>
            <person name="Xiang H."/>
            <person name="Gusti V."/>
            <person name="Clausen I.G."/>
            <person name="Olsen P.B."/>
            <person name="Rasmussen M.D."/>
            <person name="Andersen J.T."/>
            <person name="Joergensen P.L."/>
            <person name="Larsen T.S."/>
            <person name="Sorokin A."/>
            <person name="Bolotin A."/>
            <person name="Lapidus A."/>
            <person name="Galleron N."/>
            <person name="Ehrlich S.D."/>
            <person name="Berka R.M."/>
        </authorList>
    </citation>
    <scope>NUCLEOTIDE SEQUENCE [LARGE SCALE GENOMIC DNA]</scope>
    <source>
        <strain>ATCC 14580 / DSM 13 / JCM 2505 / CCUG 7422 / NBRC 12200 / NCIMB 9375 / NCTC 10341 / NRRL NRS-1264 / Gibson 46</strain>
    </source>
</reference>
<gene>
    <name evidence="1" type="primary">gatC</name>
    <name type="ordered locus">BLi00730</name>
    <name type="ordered locus">BL00600</name>
</gene>
<keyword id="KW-0067">ATP-binding</keyword>
<keyword id="KW-0436">Ligase</keyword>
<keyword id="KW-0547">Nucleotide-binding</keyword>
<keyword id="KW-0648">Protein biosynthesis</keyword>
<keyword id="KW-1185">Reference proteome</keyword>
<feature type="chain" id="PRO_1000016071" description="Aspartyl/glutamyl-tRNA(Asn/Gln) amidotransferase subunit C">
    <location>
        <begin position="1"/>
        <end position="96"/>
    </location>
</feature>
<comment type="function">
    <text evidence="1">Allows the formation of correctly charged Asn-tRNA(Asn) or Gln-tRNA(Gln) through the transamidation of misacylated Asp-tRNA(Asn) or Glu-tRNA(Gln) in organisms which lack either or both of asparaginyl-tRNA or glutaminyl-tRNA synthetases. The reaction takes place in the presence of glutamine and ATP through an activated phospho-Asp-tRNA(Asn) or phospho-Glu-tRNA(Gln).</text>
</comment>
<comment type="catalytic activity">
    <reaction evidence="1">
        <text>L-glutamyl-tRNA(Gln) + L-glutamine + ATP + H2O = L-glutaminyl-tRNA(Gln) + L-glutamate + ADP + phosphate + H(+)</text>
        <dbReference type="Rhea" id="RHEA:17521"/>
        <dbReference type="Rhea" id="RHEA-COMP:9681"/>
        <dbReference type="Rhea" id="RHEA-COMP:9684"/>
        <dbReference type="ChEBI" id="CHEBI:15377"/>
        <dbReference type="ChEBI" id="CHEBI:15378"/>
        <dbReference type="ChEBI" id="CHEBI:29985"/>
        <dbReference type="ChEBI" id="CHEBI:30616"/>
        <dbReference type="ChEBI" id="CHEBI:43474"/>
        <dbReference type="ChEBI" id="CHEBI:58359"/>
        <dbReference type="ChEBI" id="CHEBI:78520"/>
        <dbReference type="ChEBI" id="CHEBI:78521"/>
        <dbReference type="ChEBI" id="CHEBI:456216"/>
    </reaction>
</comment>
<comment type="catalytic activity">
    <reaction evidence="1">
        <text>L-aspartyl-tRNA(Asn) + L-glutamine + ATP + H2O = L-asparaginyl-tRNA(Asn) + L-glutamate + ADP + phosphate + 2 H(+)</text>
        <dbReference type="Rhea" id="RHEA:14513"/>
        <dbReference type="Rhea" id="RHEA-COMP:9674"/>
        <dbReference type="Rhea" id="RHEA-COMP:9677"/>
        <dbReference type="ChEBI" id="CHEBI:15377"/>
        <dbReference type="ChEBI" id="CHEBI:15378"/>
        <dbReference type="ChEBI" id="CHEBI:29985"/>
        <dbReference type="ChEBI" id="CHEBI:30616"/>
        <dbReference type="ChEBI" id="CHEBI:43474"/>
        <dbReference type="ChEBI" id="CHEBI:58359"/>
        <dbReference type="ChEBI" id="CHEBI:78515"/>
        <dbReference type="ChEBI" id="CHEBI:78516"/>
        <dbReference type="ChEBI" id="CHEBI:456216"/>
    </reaction>
</comment>
<comment type="subunit">
    <text evidence="1">Heterotrimer of A, B and C subunits.</text>
</comment>
<comment type="similarity">
    <text evidence="1">Belongs to the GatC family.</text>
</comment>
<proteinExistence type="inferred from homology"/>